<feature type="chain" id="PRO_0000307539" description="Triosephosphate isomerase">
    <location>
        <begin position="1"/>
        <end position="269"/>
    </location>
</feature>
<feature type="active site" description="Electrophile" evidence="1">
    <location>
        <position position="105"/>
    </location>
</feature>
<feature type="active site" description="Proton acceptor" evidence="1">
    <location>
        <position position="183"/>
    </location>
</feature>
<feature type="binding site" evidence="1">
    <location>
        <begin position="8"/>
        <end position="10"/>
    </location>
    <ligand>
        <name>substrate</name>
    </ligand>
</feature>
<feature type="binding site" evidence="1">
    <location>
        <position position="189"/>
    </location>
    <ligand>
        <name>substrate</name>
    </ligand>
</feature>
<feature type="binding site" evidence="1">
    <location>
        <position position="227"/>
    </location>
    <ligand>
        <name>substrate</name>
    </ligand>
</feature>
<feature type="binding site" evidence="1">
    <location>
        <begin position="248"/>
        <end position="249"/>
    </location>
    <ligand>
        <name>substrate</name>
    </ligand>
</feature>
<keyword id="KW-0963">Cytoplasm</keyword>
<keyword id="KW-0312">Gluconeogenesis</keyword>
<keyword id="KW-0324">Glycolysis</keyword>
<keyword id="KW-0413">Isomerase</keyword>
<keyword id="KW-1185">Reference proteome</keyword>
<reference key="1">
    <citation type="journal article" date="2010" name="Appl. Environ. Microbiol.">
        <title>The genome sequence of Psychrobacter arcticus 273-4, a psychroactive Siberian permafrost bacterium, reveals mechanisms for adaptation to low-temperature growth.</title>
        <authorList>
            <person name="Ayala-del-Rio H.L."/>
            <person name="Chain P.S."/>
            <person name="Grzymski J.J."/>
            <person name="Ponder M.A."/>
            <person name="Ivanova N."/>
            <person name="Bergholz P.W."/>
            <person name="Di Bartolo G."/>
            <person name="Hauser L."/>
            <person name="Land M."/>
            <person name="Bakermans C."/>
            <person name="Rodrigues D."/>
            <person name="Klappenbach J."/>
            <person name="Zarka D."/>
            <person name="Larimer F."/>
            <person name="Richardson P."/>
            <person name="Murray A."/>
            <person name="Thomashow M."/>
            <person name="Tiedje J.M."/>
        </authorList>
    </citation>
    <scope>NUCLEOTIDE SEQUENCE [LARGE SCALE GENOMIC DNA]</scope>
    <source>
        <strain>DSM 17307 / VKM B-2377 / 273-4</strain>
    </source>
</reference>
<comment type="function">
    <text evidence="1">Involved in the gluconeogenesis. Catalyzes stereospecifically the conversion of dihydroxyacetone phosphate (DHAP) to D-glyceraldehyde-3-phosphate (G3P).</text>
</comment>
<comment type="catalytic activity">
    <reaction evidence="1">
        <text>D-glyceraldehyde 3-phosphate = dihydroxyacetone phosphate</text>
        <dbReference type="Rhea" id="RHEA:18585"/>
        <dbReference type="ChEBI" id="CHEBI:57642"/>
        <dbReference type="ChEBI" id="CHEBI:59776"/>
        <dbReference type="EC" id="5.3.1.1"/>
    </reaction>
</comment>
<comment type="pathway">
    <text evidence="1">Carbohydrate biosynthesis; gluconeogenesis.</text>
</comment>
<comment type="pathway">
    <text evidence="1">Carbohydrate degradation; glycolysis; D-glyceraldehyde 3-phosphate from glycerone phosphate: step 1/1.</text>
</comment>
<comment type="subunit">
    <text evidence="1">Homodimer.</text>
</comment>
<comment type="subcellular location">
    <subcellularLocation>
        <location evidence="1">Cytoplasm</location>
    </subcellularLocation>
</comment>
<comment type="similarity">
    <text evidence="1">Belongs to the triosephosphate isomerase family.</text>
</comment>
<gene>
    <name evidence="1" type="primary">tpiA</name>
    <name type="ordered locus">Psyc_0065</name>
</gene>
<name>TPIS_PSYA2</name>
<protein>
    <recommendedName>
        <fullName evidence="1">Triosephosphate isomerase</fullName>
        <shortName evidence="1">TIM</shortName>
        <shortName evidence="1">TPI</shortName>
        <ecNumber evidence="1">5.3.1.1</ecNumber>
    </recommendedName>
    <alternativeName>
        <fullName evidence="1">Triose-phosphate isomerase</fullName>
    </alternativeName>
</protein>
<evidence type="ECO:0000255" key="1">
    <source>
        <dbReference type="HAMAP-Rule" id="MF_00147"/>
    </source>
</evidence>
<proteinExistence type="inferred from homology"/>
<organism>
    <name type="scientific">Psychrobacter arcticus (strain DSM 17307 / VKM B-2377 / 273-4)</name>
    <dbReference type="NCBI Taxonomy" id="259536"/>
    <lineage>
        <taxon>Bacteria</taxon>
        <taxon>Pseudomonadati</taxon>
        <taxon>Pseudomonadota</taxon>
        <taxon>Gammaproteobacteria</taxon>
        <taxon>Moraxellales</taxon>
        <taxon>Moraxellaceae</taxon>
        <taxon>Psychrobacter</taxon>
    </lineage>
</organism>
<accession>Q4FVL9</accession>
<sequence length="269" mass="28692">MQAWVIGNWKQNPATSHDVDALLNELCTAISTTKQLSHNNSTRCQIMVAPSFLHLAAVSSRLKDTSVLCAAQDVSAYSASVGAYTGDCSAQQIADVGATWTILGHSERRQYHQESNDTLLQKMTHALTQELGVVFCIGETQAQYDAKQTLPVIDSQLAVVKKLIAEQPEVIDSLSTRLIIAYEPVWAIGTGKVPTVSEVSATHQYIKQTLAGFADSLSNMTVLYGGSVNADNADSFAADPMIHGALVGGASLKAESFLAIVTAFSKGSM</sequence>
<dbReference type="EC" id="5.3.1.1" evidence="1"/>
<dbReference type="EMBL" id="CP000082">
    <property type="protein sequence ID" value="AAZ17939.1"/>
    <property type="molecule type" value="Genomic_DNA"/>
</dbReference>
<dbReference type="RefSeq" id="WP_011279378.1">
    <property type="nucleotide sequence ID" value="NC_007204.1"/>
</dbReference>
<dbReference type="SMR" id="Q4FVL9"/>
<dbReference type="STRING" id="259536.Psyc_0065"/>
<dbReference type="KEGG" id="par:Psyc_0065"/>
<dbReference type="eggNOG" id="COG0149">
    <property type="taxonomic scope" value="Bacteria"/>
</dbReference>
<dbReference type="HOGENOM" id="CLU_024251_2_1_6"/>
<dbReference type="OrthoDB" id="9809429at2"/>
<dbReference type="UniPathway" id="UPA00109">
    <property type="reaction ID" value="UER00189"/>
</dbReference>
<dbReference type="UniPathway" id="UPA00138"/>
<dbReference type="Proteomes" id="UP000000546">
    <property type="component" value="Chromosome"/>
</dbReference>
<dbReference type="GO" id="GO:0005829">
    <property type="term" value="C:cytosol"/>
    <property type="evidence" value="ECO:0007669"/>
    <property type="project" value="TreeGrafter"/>
</dbReference>
<dbReference type="GO" id="GO:0004807">
    <property type="term" value="F:triose-phosphate isomerase activity"/>
    <property type="evidence" value="ECO:0007669"/>
    <property type="project" value="UniProtKB-UniRule"/>
</dbReference>
<dbReference type="GO" id="GO:0006094">
    <property type="term" value="P:gluconeogenesis"/>
    <property type="evidence" value="ECO:0007669"/>
    <property type="project" value="UniProtKB-UniRule"/>
</dbReference>
<dbReference type="GO" id="GO:0046166">
    <property type="term" value="P:glyceraldehyde-3-phosphate biosynthetic process"/>
    <property type="evidence" value="ECO:0007669"/>
    <property type="project" value="TreeGrafter"/>
</dbReference>
<dbReference type="GO" id="GO:0019563">
    <property type="term" value="P:glycerol catabolic process"/>
    <property type="evidence" value="ECO:0007669"/>
    <property type="project" value="TreeGrafter"/>
</dbReference>
<dbReference type="GO" id="GO:0006096">
    <property type="term" value="P:glycolytic process"/>
    <property type="evidence" value="ECO:0007669"/>
    <property type="project" value="UniProtKB-UniRule"/>
</dbReference>
<dbReference type="CDD" id="cd00311">
    <property type="entry name" value="TIM"/>
    <property type="match status" value="1"/>
</dbReference>
<dbReference type="Gene3D" id="3.20.20.70">
    <property type="entry name" value="Aldolase class I"/>
    <property type="match status" value="1"/>
</dbReference>
<dbReference type="HAMAP" id="MF_00147_B">
    <property type="entry name" value="TIM_B"/>
    <property type="match status" value="1"/>
</dbReference>
<dbReference type="InterPro" id="IPR013785">
    <property type="entry name" value="Aldolase_TIM"/>
</dbReference>
<dbReference type="InterPro" id="IPR035990">
    <property type="entry name" value="TIM_sf"/>
</dbReference>
<dbReference type="InterPro" id="IPR022896">
    <property type="entry name" value="TrioseP_Isoase_bac/euk"/>
</dbReference>
<dbReference type="InterPro" id="IPR000652">
    <property type="entry name" value="Triosephosphate_isomerase"/>
</dbReference>
<dbReference type="InterPro" id="IPR020861">
    <property type="entry name" value="Triosephosphate_isomerase_AS"/>
</dbReference>
<dbReference type="NCBIfam" id="TIGR00419">
    <property type="entry name" value="tim"/>
    <property type="match status" value="1"/>
</dbReference>
<dbReference type="PANTHER" id="PTHR21139">
    <property type="entry name" value="TRIOSEPHOSPHATE ISOMERASE"/>
    <property type="match status" value="1"/>
</dbReference>
<dbReference type="PANTHER" id="PTHR21139:SF42">
    <property type="entry name" value="TRIOSEPHOSPHATE ISOMERASE"/>
    <property type="match status" value="1"/>
</dbReference>
<dbReference type="Pfam" id="PF00121">
    <property type="entry name" value="TIM"/>
    <property type="match status" value="1"/>
</dbReference>
<dbReference type="SUPFAM" id="SSF51351">
    <property type="entry name" value="Triosephosphate isomerase (TIM)"/>
    <property type="match status" value="1"/>
</dbReference>
<dbReference type="PROSITE" id="PS00171">
    <property type="entry name" value="TIM_1"/>
    <property type="match status" value="1"/>
</dbReference>
<dbReference type="PROSITE" id="PS51440">
    <property type="entry name" value="TIM_2"/>
    <property type="match status" value="1"/>
</dbReference>